<evidence type="ECO:0000250" key="1"/>
<evidence type="ECO:0000269" key="2">
    <source>
    </source>
</evidence>
<evidence type="ECO:0000305" key="3"/>
<proteinExistence type="evidence at protein level"/>
<accession>P83063</accession>
<organism>
    <name type="scientific">Bacillus cereus</name>
    <dbReference type="NCBI Taxonomy" id="1396"/>
    <lineage>
        <taxon>Bacteria</taxon>
        <taxon>Bacillati</taxon>
        <taxon>Bacillota</taxon>
        <taxon>Bacilli</taxon>
        <taxon>Bacillales</taxon>
        <taxon>Bacillaceae</taxon>
        <taxon>Bacillus</taxon>
        <taxon>Bacillus cereus group</taxon>
    </lineage>
</organism>
<dbReference type="eggNOG" id="COG0244">
    <property type="taxonomic scope" value="Bacteria"/>
</dbReference>
<dbReference type="GO" id="GO:1990904">
    <property type="term" value="C:ribonucleoprotein complex"/>
    <property type="evidence" value="ECO:0007669"/>
    <property type="project" value="UniProtKB-KW"/>
</dbReference>
<dbReference type="GO" id="GO:0005840">
    <property type="term" value="C:ribosome"/>
    <property type="evidence" value="ECO:0007669"/>
    <property type="project" value="UniProtKB-KW"/>
</dbReference>
<dbReference type="GO" id="GO:0019843">
    <property type="term" value="F:rRNA binding"/>
    <property type="evidence" value="ECO:0007669"/>
    <property type="project" value="UniProtKB-KW"/>
</dbReference>
<reference key="1">
    <citation type="journal article" date="2002" name="J. Appl. Microbiol.">
        <title>Acid stress in the food pathogen Bacillus cereus.</title>
        <authorList>
            <person name="Browne N."/>
            <person name="Dowds B.C.A."/>
        </authorList>
    </citation>
    <scope>PROTEIN SEQUENCE OF 2-21</scope>
    <source>
        <strain>DSM 626 / NCIMB 11796 / T</strain>
    </source>
</reference>
<keyword id="KW-0903">Direct protein sequencing</keyword>
<keyword id="KW-0687">Ribonucleoprotein</keyword>
<keyword id="KW-0689">Ribosomal protein</keyword>
<keyword id="KW-0694">RNA-binding</keyword>
<keyword id="KW-0699">rRNA-binding</keyword>
<sequence length="21" mass="2388">MSKVIETKQQVVTEIADKLRA</sequence>
<gene>
    <name type="primary">rplJ</name>
</gene>
<name>RL10_BACCE</name>
<protein>
    <recommendedName>
        <fullName evidence="3">Large ribosomal subunit protein uL10</fullName>
    </recommendedName>
    <alternativeName>
        <fullName>50S ribosomal protein L10</fullName>
    </alternativeName>
</protein>
<feature type="initiator methionine" description="Removed" evidence="2">
    <location>
        <position position="1"/>
    </location>
</feature>
<feature type="chain" id="PRO_0000271257" description="Large ribosomal subunit protein uL10">
    <location>
        <begin position="2"/>
        <end position="21" status="greater than"/>
    </location>
</feature>
<feature type="non-terminal residue">
    <location>
        <position position="21"/>
    </location>
</feature>
<comment type="function">
    <text evidence="1">Forms part of the ribosomal stalk, playing a central role in the interaction of the ribosome with GTP-bound translation factors.</text>
</comment>
<comment type="subunit">
    <text evidence="1">Part of the ribosomal stalk of the 50S ribosomal subunit. The N-terminus interacts with L11 and the large rRNA to form the base of the stalk. The C-terminus forms an elongated spine to which L12 dimers bind in a sequential fashion forming a multimeric L10(L12)X complex (By similarity).</text>
</comment>
<comment type="miscellaneous">
    <text>Under acid-stress, this protein is expressed at a higher level in wild-type B.cereus than in the acid-sensitive mutant strain NB1.</text>
</comment>
<comment type="similarity">
    <text evidence="3">Belongs to the universal ribosomal protein uL10 family.</text>
</comment>